<feature type="chain" id="PRO_0000164909" description="K protein">
    <location>
        <begin position="1"/>
        <end position="53"/>
    </location>
</feature>
<protein>
    <recommendedName>
        <fullName>K protein</fullName>
    </recommendedName>
</protein>
<comment type="function">
    <text>No function has yet been ascribed to K protein.</text>
</comment>
<comment type="miscellaneous">
    <text>Gene K overlaps genes B, A, and C.</text>
</comment>
<gene>
    <name type="primary">K</name>
</gene>
<proteinExistence type="predicted"/>
<dbReference type="EMBL" id="X60322">
    <property type="protein sequence ID" value="CAA42876.1"/>
    <property type="molecule type" value="Genomic_DNA"/>
</dbReference>
<dbReference type="PIR" id="S22326">
    <property type="entry name" value="S22326"/>
</dbReference>
<dbReference type="RefSeq" id="NP_039592.1">
    <property type="nucleotide sequence ID" value="NC_001330.1"/>
</dbReference>
<dbReference type="SMR" id="P31282"/>
<dbReference type="GeneID" id="1260692"/>
<dbReference type="KEGG" id="vg:1260692"/>
<dbReference type="OrthoDB" id="26323at10239"/>
<dbReference type="Proteomes" id="UP000002137">
    <property type="component" value="Genome"/>
</dbReference>
<reference key="1">
    <citation type="journal article" date="1992" name="Biochim. Biophys. Acta">
        <title>Nucleotide sequence of the genome of the bacteriophage alpha 3: interrelationship of the genome structure and the gene products with those of the phages, phi X174, G4 and phi K.</title>
        <authorList>
            <person name="Kodaira K."/>
            <person name="Nakano K."/>
            <person name="Okada S."/>
            <person name="Taketo A."/>
        </authorList>
    </citation>
    <scope>NUCLEOTIDE SEQUENCE [GENOMIC DNA]</scope>
</reference>
<organism>
    <name type="scientific">Escherichia phage alpha3</name>
    <name type="common">Bacteriophage alpha-3</name>
    <dbReference type="NCBI Taxonomy" id="10849"/>
    <lineage>
        <taxon>Viruses</taxon>
        <taxon>Monodnaviria</taxon>
        <taxon>Sangervirae</taxon>
        <taxon>Phixviricota</taxon>
        <taxon>Malgrandaviricetes</taxon>
        <taxon>Petitvirales</taxon>
        <taxon>Microviridae</taxon>
        <taxon>Bullavirinae</taxon>
        <taxon>Alphatrevirus</taxon>
        <taxon>Alphatrevirus alpha3</taxon>
    </lineage>
</organism>
<keyword id="KW-1185">Reference proteome</keyword>
<sequence>MKHVNTLLMQELRLLICELKRLRLSAVSDPDFSQEKIHAELDSLLCKLSRHFD</sequence>
<organismHost>
    <name type="scientific">Escherichia coli</name>
    <dbReference type="NCBI Taxonomy" id="562"/>
</organismHost>
<accession>P31282</accession>
<name>VGK_BPAL3</name>